<protein>
    <recommendedName>
        <fullName>Endophilin-A3</fullName>
    </recommendedName>
    <alternativeName>
        <fullName>EEN-B2</fullName>
    </alternativeName>
    <alternativeName>
        <fullName>Endophilin-3</fullName>
    </alternativeName>
    <alternativeName>
        <fullName>SH3 domain protein 2C</fullName>
    </alternativeName>
    <alternativeName>
        <fullName>SH3 domain-containing GRB2-like protein 3</fullName>
    </alternativeName>
</protein>
<sequence>MSVAGLKKQFHKASQLFSEKISGAEGTKLDDEFLDMERKIDVTNKVVAEILSKTTEYLQPNPAYRAKLGMLNTVSKIRGQVKTTGYPQTEGLLGDCMLKYGKELGEDSTFGNALIEVGESMKLMAEVKDSLDINVKQTFIDPLQLLQDKDLKEIGHHLKKLEGRRLDYDYKKKRVGKIPDEEVRQAVEKFEESKELAERSMFNFLENDVEQVSQLAVFIEAALDYHRQSTEILQELQSKLQMRISAASSVPRREYKPRPVKRSSSELNGVSTTSVVKTTGSNIPMDQPCCRGLYDFEPENQGELGFKEGDIITLTNQIDENWYEGMIHGESGFFPINYVEVIVPLPQ</sequence>
<gene>
    <name type="primary">SH3GL3</name>
    <name type="synonym">CNSA3</name>
    <name type="synonym">SH3D2C</name>
</gene>
<proteinExistence type="evidence at protein level"/>
<feature type="chain" id="PRO_0000146750" description="Endophilin-A3">
    <location>
        <begin position="1"/>
        <end position="347"/>
    </location>
</feature>
<feature type="domain" description="BAR" evidence="5">
    <location>
        <begin position="18"/>
        <end position="249"/>
    </location>
</feature>
<feature type="domain" description="SH3" evidence="4">
    <location>
        <begin position="285"/>
        <end position="344"/>
    </location>
</feature>
<feature type="region of interest" description="Membrane-binding amphipathic helix" evidence="1">
    <location>
        <begin position="1"/>
        <end position="21"/>
    </location>
</feature>
<feature type="region of interest" description="Required for dimerization upon membrane association" evidence="1">
    <location>
        <begin position="60"/>
        <end position="87"/>
    </location>
</feature>
<feature type="region of interest" description="Interaction with ARC" evidence="1">
    <location>
        <begin position="218"/>
        <end position="254"/>
    </location>
</feature>
<feature type="region of interest" description="Disordered" evidence="6">
    <location>
        <begin position="248"/>
        <end position="271"/>
    </location>
</feature>
<feature type="coiled-coil region" evidence="3">
    <location>
        <begin position="181"/>
        <end position="201"/>
    </location>
</feature>
<feature type="modified residue" description="Phosphoserine" evidence="16">
    <location>
        <position position="265"/>
    </location>
</feature>
<feature type="splice variant" id="VSP_001441" description="In isoform 2." evidence="14">
    <location>
        <begin position="1"/>
        <end position="69"/>
    </location>
</feature>
<feature type="splice variant" id="VSP_001440" description="In isoform 3." evidence="14">
    <original>MSVAGLKKQFHKAS</original>
    <variation>MDGIFAGIICNQANRCLTWTSQ</variation>
    <location>
        <begin position="1"/>
        <end position="14"/>
    </location>
</feature>
<feature type="splice variant" id="VSP_001442" description="In isoform 4." evidence="14">
    <original>IITLTNQIDENWYEGMIHGESGFFPINYVEVIVPLPQ</original>
    <variation>GTFRKIKRETKIKMCRKKIVNIYKLKDQQH</variation>
    <location>
        <begin position="311"/>
        <end position="347"/>
    </location>
</feature>
<feature type="helix" evidence="18">
    <location>
        <begin position="31"/>
        <end position="58"/>
    </location>
</feature>
<feature type="helix" evidence="18">
    <location>
        <begin position="62"/>
        <end position="69"/>
    </location>
</feature>
<feature type="helix" evidence="18">
    <location>
        <begin position="89"/>
        <end position="104"/>
    </location>
</feature>
<feature type="helix" evidence="18">
    <location>
        <begin position="109"/>
        <end position="138"/>
    </location>
</feature>
<feature type="helix" evidence="18">
    <location>
        <begin position="140"/>
        <end position="148"/>
    </location>
</feature>
<feature type="helix" evidence="18">
    <location>
        <begin position="150"/>
        <end position="172"/>
    </location>
</feature>
<feature type="turn" evidence="18">
    <location>
        <begin position="173"/>
        <end position="176"/>
    </location>
</feature>
<feature type="helix" evidence="18">
    <location>
        <begin position="180"/>
        <end position="206"/>
    </location>
</feature>
<feature type="helix" evidence="18">
    <location>
        <begin position="209"/>
        <end position="246"/>
    </location>
</feature>
<feature type="strand" evidence="17">
    <location>
        <begin position="289"/>
        <end position="294"/>
    </location>
</feature>
<feature type="strand" evidence="17">
    <location>
        <begin position="311"/>
        <end position="327"/>
    </location>
</feature>
<feature type="strand" evidence="17">
    <location>
        <begin position="330"/>
        <end position="335"/>
    </location>
</feature>
<feature type="helix" evidence="17">
    <location>
        <begin position="336"/>
        <end position="338"/>
    </location>
</feature>
<feature type="strand" evidence="17">
    <location>
        <begin position="339"/>
        <end position="342"/>
    </location>
</feature>
<reference key="1">
    <citation type="journal article" date="1997" name="Genomics">
        <title>A novel SH3-containing human gene family preferentially expressed in the central nervous system.</title>
        <authorList>
            <person name="Giachino C."/>
            <person name="Lantelme E."/>
            <person name="Lanzetti L."/>
            <person name="Saccone S."/>
            <person name="Della Valle G."/>
            <person name="Migone N."/>
        </authorList>
    </citation>
    <scope>NUCLEOTIDE SEQUENCE [MRNA] (ISOFORM 1)</scope>
    <source>
        <tissue>Fetal brain</tissue>
    </source>
</reference>
<reference key="2">
    <citation type="submission" date="1998-03" db="EMBL/GenBank/DDBJ databases">
        <title>A family of EEN-like genes coding for SH3-domain containing proteins are preferentially expressed in human brain.</title>
        <authorList>
            <person name="So C.W."/>
            <person name="So C.K.C."/>
            <person name="Sham M.H."/>
            <person name="Chan L.C."/>
        </authorList>
    </citation>
    <scope>NUCLEOTIDE SEQUENCE [MRNA] (ISOFORMS 1; 2; 3 AND 4)</scope>
    <source>
        <tissue>Brain</tissue>
    </source>
</reference>
<reference key="3">
    <citation type="journal article" date="1998" name="Mol. Cell">
        <title>SH3GL3 associates with the Huntingtin exon 1 protein and promotes the formation of polygln-containing protein aggregates.</title>
        <authorList>
            <person name="Sittler A."/>
            <person name="Walter S."/>
            <person name="Wedemeyer N."/>
            <person name="Hasenbank R."/>
            <person name="Scherzinger E."/>
            <person name="Eickhoff H."/>
            <person name="Bates G.P."/>
            <person name="Lehrach H."/>
            <person name="Wanker E.E."/>
        </authorList>
    </citation>
    <scope>INTERACTION WITH HUNTINGTIN EXON 1 PROTEIN</scope>
</reference>
<reference key="4">
    <citation type="journal article" date="1999" name="J. Biol. Chem.">
        <title>The SH3 domains of endophilin and amphiphysin bind to the proline-rich region of synaptojanin 1 at distinct sites that display an unconventional binding specificity.</title>
        <authorList>
            <person name="Cestra G."/>
            <person name="Castagnoli L."/>
            <person name="Dente L."/>
            <person name="Minenkova O."/>
            <person name="Petrelli A."/>
            <person name="Migone N."/>
            <person name="Hoffmueller U."/>
            <person name="Schneider-Mergener J."/>
            <person name="Cesareni G."/>
        </authorList>
    </citation>
    <scope>INTERACTION WITH SYNJ1</scope>
</reference>
<reference key="5">
    <citation type="journal article" date="2005" name="Endocrinology">
        <title>Src homology 3-domain growth factor receptor-bound 2-like (endophilin) interacting protein 1, a novel neuronal protein that regulates energy balance.</title>
        <authorList>
            <person name="Trevaskis J."/>
            <person name="Walder K."/>
            <person name="Foletta V."/>
            <person name="Kerr-Bayles L."/>
            <person name="McMillan J."/>
            <person name="Cooper A."/>
            <person name="Lee S."/>
            <person name="Bolton K."/>
            <person name="Prior M."/>
            <person name="Fahey R."/>
            <person name="Whitecross K."/>
            <person name="Morton G.J."/>
            <person name="Schwartz M.W."/>
            <person name="Collier G.R."/>
        </authorList>
    </citation>
    <scope>INTERACTION WITH SGIP1</scope>
</reference>
<reference key="6">
    <citation type="journal article" date="2008" name="Cell. Signal.">
        <title>Ataxin-2 associates with the endocytosis complex and affects EGF receptor trafficking.</title>
        <authorList>
            <person name="Nonis D."/>
            <person name="Schmidt M.H."/>
            <person name="van de Loo S."/>
            <person name="Eich F."/>
            <person name="Dikic I."/>
            <person name="Nowock J."/>
            <person name="Auburger G."/>
        </authorList>
    </citation>
    <scope>INTERACTION WITH ATXN2</scope>
</reference>
<reference key="7">
    <citation type="journal article" date="2009" name="BMC Immunol.">
        <title>Identification of SH3 domain interaction partners of human FasL (CD178) by phage display screening.</title>
        <authorList>
            <person name="Voss M."/>
            <person name="Lettau M."/>
            <person name="Janssen O."/>
        </authorList>
    </citation>
    <scope>INTERACTION WITH FASLG</scope>
</reference>
<reference key="8">
    <citation type="journal article" date="2009" name="Eur. J. Cell Biol.">
        <title>Interaction of SH3P13 and DYDC1 protein: a germ cell component that regulates acrosome biogenesis during spermiogenesis.</title>
        <authorList>
            <person name="Li S."/>
            <person name="Qiao Y."/>
            <person name="Di Q."/>
            <person name="Le X."/>
            <person name="Zhang L."/>
            <person name="Zhang X."/>
            <person name="Zhang C."/>
            <person name="Cheng J."/>
            <person name="Zong S."/>
            <person name="Koide S.S."/>
            <person name="Miao S."/>
            <person name="Wang L."/>
        </authorList>
    </citation>
    <scope>INTERACTION WITH DYDC1</scope>
</reference>
<reference key="9">
    <citation type="journal article" date="2011" name="Sci. Signal.">
        <title>System-wide temporal characterization of the proteome and phosphoproteome of human embryonic stem cell differentiation.</title>
        <authorList>
            <person name="Rigbolt K.T."/>
            <person name="Prokhorova T.A."/>
            <person name="Akimov V."/>
            <person name="Henningsen J."/>
            <person name="Johansen P.T."/>
            <person name="Kratchmarova I."/>
            <person name="Kassem M."/>
            <person name="Mann M."/>
            <person name="Olsen J.V."/>
            <person name="Blagoev B."/>
        </authorList>
    </citation>
    <scope>IDENTIFICATION BY MASS SPECTROMETRY [LARGE SCALE ANALYSIS]</scope>
</reference>
<reference key="10">
    <citation type="journal article" date="2012" name="PLoS ONE">
        <title>Bin2 is a membrane sculpting N-BAR protein that influences leucocyte podosomes, motility and phagocytosis.</title>
        <authorList>
            <person name="Sanchez-Barrena M.J."/>
            <person name="Vallis Y."/>
            <person name="Clatworthy M.R."/>
            <person name="Doherty G.J."/>
            <person name="Veprintsev D.B."/>
            <person name="Evans P.R."/>
            <person name="McMahon H.T."/>
        </authorList>
    </citation>
    <scope>INTERACTION WITH BIN2</scope>
</reference>
<reference key="11">
    <citation type="journal article" date="2013" name="J. Proteome Res.">
        <title>Toward a comprehensive characterization of a human cancer cell phosphoproteome.</title>
        <authorList>
            <person name="Zhou H."/>
            <person name="Di Palma S."/>
            <person name="Preisinger C."/>
            <person name="Peng M."/>
            <person name="Polat A.N."/>
            <person name="Heck A.J."/>
            <person name="Mohammed S."/>
        </authorList>
    </citation>
    <scope>PHOSPHORYLATION [LARGE SCALE ANALYSIS] AT SER-265</scope>
    <scope>IDENTIFICATION BY MASS SPECTROMETRY [LARGE SCALE ANALYSIS]</scope>
    <source>
        <tissue>Erythroleukemia</tissue>
    </source>
</reference>
<reference key="12">
    <citation type="submission" date="2009-02" db="PDB data bank">
        <title>Crystal structure of BAR domain of endophilin-III.</title>
        <authorList>
            <consortium name="RIKEN structural genomics initiative (RSGI)"/>
        </authorList>
    </citation>
    <scope>X-RAY CRYSTALLOGRAPHY (2.49 ANGSTROMS) OF 22-256</scope>
</reference>
<keyword id="KW-0002">3D-structure</keyword>
<keyword id="KW-0025">Alternative splicing</keyword>
<keyword id="KW-0175">Coiled coil</keyword>
<keyword id="KW-0963">Cytoplasm</keyword>
<keyword id="KW-0254">Endocytosis</keyword>
<keyword id="KW-0967">Endosome</keyword>
<keyword id="KW-0446">Lipid-binding</keyword>
<keyword id="KW-0472">Membrane</keyword>
<keyword id="KW-0597">Phosphoprotein</keyword>
<keyword id="KW-1267">Proteomics identification</keyword>
<keyword id="KW-1185">Reference proteome</keyword>
<keyword id="KW-0728">SH3 domain</keyword>
<comment type="function">
    <text evidence="1">Implicated in endocytosis. May recruit other proteins to membranes with high curvature (By similarity).</text>
</comment>
<comment type="subunit">
    <text evidence="1 7 8 9 10 11 12 13">Interacts with ARC (By similarity). Interacts with DNM1, SGIP1 and SYNJ1. Interacts with the huntingtin exon 1 protein (HDEX1P) containing a glutamine repeat in the pathological range and promotes formation of insoluble polyglutamine-containing aggregates in vivo. Interacts with DYDC1. Interacts with FASLG. Interacts with ATXN2. Interacts with BIN2.</text>
</comment>
<comment type="interaction">
    <interactant intactId="EBI-473910">
        <id>Q99963</id>
    </interactant>
    <interactant intactId="EBI-697691">
        <id>Q99700</id>
        <label>ATXN2</label>
    </interactant>
    <organismsDiffer>false</organismsDiffer>
    <experiments>11</experiments>
</comment>
<comment type="interaction">
    <interactant intactId="EBI-473910">
        <id>Q99963</id>
    </interactant>
    <interactant intactId="EBI-466029">
        <id>P42858</id>
        <label>HTT</label>
    </interactant>
    <organismsDiffer>false</organismsDiffer>
    <experiments>9</experiments>
</comment>
<comment type="interaction">
    <interactant intactId="EBI-473910">
        <id>Q99963</id>
    </interactant>
    <interactant intactId="EBI-3940924">
        <id>Q70E73</id>
        <label>RAPH1</label>
    </interactant>
    <organismsDiffer>false</organismsDiffer>
    <experiments>4</experiments>
</comment>
<comment type="interaction">
    <interactant intactId="EBI-473910">
        <id>Q99963</id>
    </interactant>
    <interactant intactId="EBI-697911">
        <id>Q99961</id>
        <label>SH3GL1</label>
    </interactant>
    <organismsDiffer>false</organismsDiffer>
    <experiments>7</experiments>
</comment>
<comment type="interaction">
    <interactant intactId="EBI-473910">
        <id>Q99963</id>
    </interactant>
    <interactant intactId="EBI-77938">
        <id>Q99962</id>
        <label>SH3GL2</label>
    </interactant>
    <organismsDiffer>false</organismsDiffer>
    <experiments>7</experiments>
</comment>
<comment type="interaction">
    <interactant intactId="EBI-473910">
        <id>Q99963</id>
    </interactant>
    <interactant intactId="EBI-473910">
        <id>Q99963</id>
        <label>SH3GL3</label>
    </interactant>
    <organismsDiffer>false</organismsDiffer>
    <experiments>3</experiments>
</comment>
<comment type="subcellular location">
    <subcellularLocation>
        <location evidence="2">Cytoplasm</location>
    </subcellularLocation>
    <subcellularLocation>
        <location evidence="2">Early endosome membrane</location>
        <topology evidence="2">Peripheral membrane protein</topology>
    </subcellularLocation>
    <text evidence="2">Associated with postsynaptic endosomes in hippocampal neurons. Associated with presynaptic endosomes in olfactory neurons.</text>
</comment>
<comment type="alternative products">
    <event type="alternative splicing"/>
    <isoform>
        <id>Q99963-1</id>
        <name>1</name>
        <name>EEN-B2-L1</name>
        <sequence type="displayed"/>
    </isoform>
    <isoform>
        <id>Q99963-2</id>
        <name>2</name>
        <name>EEN-B2-L2</name>
        <sequence type="described" ref="VSP_001441"/>
    </isoform>
    <isoform>
        <id>Q99963-3</id>
        <name>3</name>
        <name>EEN-B2-L3</name>
        <sequence type="described" ref="VSP_001440"/>
    </isoform>
    <isoform>
        <id>Q99963-4</id>
        <name>4</name>
        <name>EEN-B2-L4</name>
        <sequence type="described" ref="VSP_001442"/>
    </isoform>
</comment>
<comment type="tissue specificity">
    <text>Brain and testis.</text>
</comment>
<comment type="domain">
    <text evidence="1">An N-terminal amphipathic helix, the BAR domain and a second amphipathic helix inserted into helix 1 of the BAR domain (N-BAR domain) induce membrane curvature and bind curved membranes.</text>
</comment>
<comment type="similarity">
    <text evidence="15">Belongs to the endophilin family.</text>
</comment>
<accession>Q99963</accession>
<accession>O43553</accession>
<accession>O43554</accession>
<name>SH3G3_HUMAN</name>
<evidence type="ECO:0000250" key="1"/>
<evidence type="ECO:0000250" key="2">
    <source>
        <dbReference type="UniProtKB" id="O35180"/>
    </source>
</evidence>
<evidence type="ECO:0000255" key="3"/>
<evidence type="ECO:0000255" key="4">
    <source>
        <dbReference type="PROSITE-ProRule" id="PRU00192"/>
    </source>
</evidence>
<evidence type="ECO:0000255" key="5">
    <source>
        <dbReference type="PROSITE-ProRule" id="PRU00361"/>
    </source>
</evidence>
<evidence type="ECO:0000256" key="6">
    <source>
        <dbReference type="SAM" id="MobiDB-lite"/>
    </source>
</evidence>
<evidence type="ECO:0000269" key="7">
    <source>
    </source>
</evidence>
<evidence type="ECO:0000269" key="8">
    <source>
    </source>
</evidence>
<evidence type="ECO:0000269" key="9">
    <source>
    </source>
</evidence>
<evidence type="ECO:0000269" key="10">
    <source>
    </source>
</evidence>
<evidence type="ECO:0000269" key="11">
    <source>
    </source>
</evidence>
<evidence type="ECO:0000269" key="12">
    <source>
    </source>
</evidence>
<evidence type="ECO:0000269" key="13">
    <source>
    </source>
</evidence>
<evidence type="ECO:0000303" key="14">
    <source ref="2"/>
</evidence>
<evidence type="ECO:0000305" key="15"/>
<evidence type="ECO:0007744" key="16">
    <source>
    </source>
</evidence>
<evidence type="ECO:0007829" key="17">
    <source>
        <dbReference type="PDB" id="2EW3"/>
    </source>
</evidence>
<evidence type="ECO:0007829" key="18">
    <source>
        <dbReference type="PDB" id="2Z0V"/>
    </source>
</evidence>
<organism>
    <name type="scientific">Homo sapiens</name>
    <name type="common">Human</name>
    <dbReference type="NCBI Taxonomy" id="9606"/>
    <lineage>
        <taxon>Eukaryota</taxon>
        <taxon>Metazoa</taxon>
        <taxon>Chordata</taxon>
        <taxon>Craniata</taxon>
        <taxon>Vertebrata</taxon>
        <taxon>Euteleostomi</taxon>
        <taxon>Mammalia</taxon>
        <taxon>Eutheria</taxon>
        <taxon>Euarchontoglires</taxon>
        <taxon>Primates</taxon>
        <taxon>Haplorrhini</taxon>
        <taxon>Catarrhini</taxon>
        <taxon>Hominidae</taxon>
        <taxon>Homo</taxon>
    </lineage>
</organism>
<dbReference type="EMBL" id="X99664">
    <property type="protein sequence ID" value="CAA67978.1"/>
    <property type="molecule type" value="mRNA"/>
</dbReference>
<dbReference type="EMBL" id="AF036269">
    <property type="protein sequence ID" value="AAC04765.1"/>
    <property type="molecule type" value="mRNA"/>
</dbReference>
<dbReference type="EMBL" id="AF036270">
    <property type="protein sequence ID" value="AAC04766.1"/>
    <property type="molecule type" value="mRNA"/>
</dbReference>
<dbReference type="EMBL" id="AF036271">
    <property type="protein sequence ID" value="AAC04767.1"/>
    <property type="molecule type" value="mRNA"/>
</dbReference>
<dbReference type="EMBL" id="AF036272">
    <property type="protein sequence ID" value="AAC04768.1"/>
    <property type="molecule type" value="mRNA"/>
</dbReference>
<dbReference type="CCDS" id="CCDS10325.2">
    <molecule id="Q99963-1"/>
</dbReference>
<dbReference type="CCDS" id="CCDS73772.1">
    <molecule id="Q99963-3"/>
</dbReference>
<dbReference type="RefSeq" id="NP_001288037.1">
    <molecule id="Q99963-2"/>
    <property type="nucleotide sequence ID" value="NM_001301108.2"/>
</dbReference>
<dbReference type="RefSeq" id="NP_001288038.1">
    <molecule id="Q99963-3"/>
    <property type="nucleotide sequence ID" value="NM_001301109.2"/>
</dbReference>
<dbReference type="RefSeq" id="NP_001311112.1">
    <molecule id="Q99963-3"/>
    <property type="nucleotide sequence ID" value="NM_001324183.2"/>
</dbReference>
<dbReference type="RefSeq" id="NP_001311114.1">
    <molecule id="Q99963-2"/>
    <property type="nucleotide sequence ID" value="NM_001324185.2"/>
</dbReference>
<dbReference type="RefSeq" id="NP_001311116.1">
    <molecule id="Q99963-2"/>
    <property type="nucleotide sequence ID" value="NM_001324187.1"/>
</dbReference>
<dbReference type="RefSeq" id="NP_003018.3">
    <molecule id="Q99963-1"/>
    <property type="nucleotide sequence ID" value="NM_003027.4"/>
</dbReference>
<dbReference type="RefSeq" id="XP_011520191.1">
    <molecule id="Q99963-3"/>
    <property type="nucleotide sequence ID" value="XM_011521889.2"/>
</dbReference>
<dbReference type="RefSeq" id="XP_016877975.1">
    <molecule id="Q99963-2"/>
    <property type="nucleotide sequence ID" value="XM_017022486.3"/>
</dbReference>
<dbReference type="RefSeq" id="XP_054189144.1">
    <molecule id="Q99963-3"/>
    <property type="nucleotide sequence ID" value="XM_054333169.1"/>
</dbReference>
<dbReference type="RefSeq" id="XP_054189145.1">
    <molecule id="Q99963-2"/>
    <property type="nucleotide sequence ID" value="XM_054333170.1"/>
</dbReference>
<dbReference type="RefSeq" id="XP_054234591.1">
    <molecule id="Q99963-3"/>
    <property type="nucleotide sequence ID" value="XM_054378616.1"/>
</dbReference>
<dbReference type="RefSeq" id="XP_054234592.1">
    <molecule id="Q99963-2"/>
    <property type="nucleotide sequence ID" value="XM_054378617.1"/>
</dbReference>
<dbReference type="PDB" id="2EW3">
    <property type="method" value="NMR"/>
    <property type="chains" value="A=285-345"/>
</dbReference>
<dbReference type="PDB" id="2Z0V">
    <property type="method" value="X-ray"/>
    <property type="resolution" value="2.49 A"/>
    <property type="chains" value="A/B=24-256"/>
</dbReference>
<dbReference type="PDBsum" id="2EW3"/>
<dbReference type="PDBsum" id="2Z0V"/>
<dbReference type="SMR" id="Q99963"/>
<dbReference type="BioGRID" id="112354">
    <property type="interactions" value="135"/>
</dbReference>
<dbReference type="CORUM" id="Q99963"/>
<dbReference type="DIP" id="DIP-34766N"/>
<dbReference type="FunCoup" id="Q99963">
    <property type="interactions" value="447"/>
</dbReference>
<dbReference type="IntAct" id="Q99963">
    <property type="interactions" value="138"/>
</dbReference>
<dbReference type="MINT" id="Q99963"/>
<dbReference type="STRING" id="9606.ENSP00000320092"/>
<dbReference type="GlyCosmos" id="Q99963">
    <property type="glycosylation" value="1 site, 1 glycan"/>
</dbReference>
<dbReference type="GlyGen" id="Q99963">
    <property type="glycosylation" value="1 site, 1 O-linked glycan (1 site)"/>
</dbReference>
<dbReference type="iPTMnet" id="Q99963"/>
<dbReference type="PhosphoSitePlus" id="Q99963"/>
<dbReference type="BioMuta" id="SH3GL3"/>
<dbReference type="DMDM" id="12643798"/>
<dbReference type="jPOST" id="Q99963"/>
<dbReference type="MassIVE" id="Q99963"/>
<dbReference type="PaxDb" id="9606-ENSP00000320092"/>
<dbReference type="PeptideAtlas" id="Q99963"/>
<dbReference type="ProteomicsDB" id="78547">
    <molecule id="Q99963-1"/>
</dbReference>
<dbReference type="ProteomicsDB" id="78548">
    <molecule id="Q99963-2"/>
</dbReference>
<dbReference type="ProteomicsDB" id="78549">
    <molecule id="Q99963-3"/>
</dbReference>
<dbReference type="ProteomicsDB" id="78550">
    <molecule id="Q99963-4"/>
</dbReference>
<dbReference type="Pumba" id="Q99963"/>
<dbReference type="Antibodypedia" id="28199">
    <property type="antibodies" value="153 antibodies from 28 providers"/>
</dbReference>
<dbReference type="DNASU" id="6457"/>
<dbReference type="Ensembl" id="ENST00000324537.5">
    <molecule id="Q99963-3"/>
    <property type="protein sequence ID" value="ENSP00000320092.5"/>
    <property type="gene ID" value="ENSG00000140600.17"/>
</dbReference>
<dbReference type="Ensembl" id="ENST00000427482.7">
    <molecule id="Q99963-1"/>
    <property type="protein sequence ID" value="ENSP00000391372.2"/>
    <property type="gene ID" value="ENSG00000140600.17"/>
</dbReference>
<dbReference type="Ensembl" id="ENST00000708174.1">
    <molecule id="Q99963-1"/>
    <property type="protein sequence ID" value="ENSP00000517113.1"/>
    <property type="gene ID" value="ENSG00000291608.1"/>
</dbReference>
<dbReference type="Ensembl" id="ENST00000708176.1">
    <molecule id="Q99963-3"/>
    <property type="protein sequence ID" value="ENSP00000517115.1"/>
    <property type="gene ID" value="ENSG00000291608.1"/>
</dbReference>
<dbReference type="GeneID" id="6457"/>
<dbReference type="KEGG" id="hsa:6457"/>
<dbReference type="MANE-Select" id="ENST00000427482.7">
    <property type="protein sequence ID" value="ENSP00000391372.2"/>
    <property type="RefSeq nucleotide sequence ID" value="NM_003027.5"/>
    <property type="RefSeq protein sequence ID" value="NP_003018.3"/>
</dbReference>
<dbReference type="UCSC" id="uc002bju.4">
    <molecule id="Q99963-1"/>
    <property type="organism name" value="human"/>
</dbReference>
<dbReference type="AGR" id="HGNC:10832"/>
<dbReference type="CTD" id="6457"/>
<dbReference type="DisGeNET" id="6457"/>
<dbReference type="GeneCards" id="SH3GL3"/>
<dbReference type="HGNC" id="HGNC:10832">
    <property type="gene designation" value="SH3GL3"/>
</dbReference>
<dbReference type="HPA" id="ENSG00000140600">
    <property type="expression patterns" value="Tissue enhanced (brain, testis)"/>
</dbReference>
<dbReference type="MIM" id="603362">
    <property type="type" value="gene"/>
</dbReference>
<dbReference type="neXtProt" id="NX_Q99963"/>
<dbReference type="OpenTargets" id="ENSG00000140600"/>
<dbReference type="PharmGKB" id="PA35738"/>
<dbReference type="VEuPathDB" id="HostDB:ENSG00000140600"/>
<dbReference type="eggNOG" id="KOG1118">
    <property type="taxonomic scope" value="Eukaryota"/>
</dbReference>
<dbReference type="GeneTree" id="ENSGT00940000157398"/>
<dbReference type="HOGENOM" id="CLU_047887_0_0_1"/>
<dbReference type="InParanoid" id="Q99963"/>
<dbReference type="OMA" id="NFLENDX"/>
<dbReference type="OrthoDB" id="443981at2759"/>
<dbReference type="PAN-GO" id="Q99963">
    <property type="GO annotations" value="4 GO annotations based on evolutionary models"/>
</dbReference>
<dbReference type="PhylomeDB" id="Q99963"/>
<dbReference type="TreeFam" id="TF313281"/>
<dbReference type="PathwayCommons" id="Q99963"/>
<dbReference type="Reactome" id="R-HSA-182971">
    <property type="pathway name" value="EGFR downregulation"/>
</dbReference>
<dbReference type="Reactome" id="R-HSA-6807004">
    <property type="pathway name" value="Negative regulation of MET activity"/>
</dbReference>
<dbReference type="Reactome" id="R-HSA-8856825">
    <property type="pathway name" value="Cargo recognition for clathrin-mediated endocytosis"/>
</dbReference>
<dbReference type="Reactome" id="R-HSA-8856828">
    <property type="pathway name" value="Clathrin-mediated endocytosis"/>
</dbReference>
<dbReference type="Reactome" id="R-HSA-8875360">
    <property type="pathway name" value="InlB-mediated entry of Listeria monocytogenes into host cell"/>
</dbReference>
<dbReference type="Reactome" id="R-HSA-9031628">
    <property type="pathway name" value="NGF-stimulated transcription"/>
</dbReference>
<dbReference type="SignaLink" id="Q99963"/>
<dbReference type="SIGNOR" id="Q99963"/>
<dbReference type="BioGRID-ORCS" id="6457">
    <property type="hits" value="11 hits in 1150 CRISPR screens"/>
</dbReference>
<dbReference type="CD-CODE" id="91857CE7">
    <property type="entry name" value="Nucleolus"/>
</dbReference>
<dbReference type="CD-CODE" id="FB4E32DD">
    <property type="entry name" value="Presynaptic clusters and postsynaptic densities"/>
</dbReference>
<dbReference type="ChiTaRS" id="SH3GL3">
    <property type="organism name" value="human"/>
</dbReference>
<dbReference type="EvolutionaryTrace" id="Q99963"/>
<dbReference type="GeneWiki" id="SH3GL3"/>
<dbReference type="GenomeRNAi" id="6457"/>
<dbReference type="Pharos" id="Q99963">
    <property type="development level" value="Tbio"/>
</dbReference>
<dbReference type="PRO" id="PR:Q99963"/>
<dbReference type="Proteomes" id="UP000005640">
    <property type="component" value="Chromosome 15"/>
</dbReference>
<dbReference type="RNAct" id="Q99963">
    <property type="molecule type" value="protein"/>
</dbReference>
<dbReference type="Bgee" id="ENSG00000140600">
    <property type="expression patterns" value="Expressed in sperm and 140 other cell types or tissues"/>
</dbReference>
<dbReference type="ExpressionAtlas" id="Q99963">
    <property type="expression patterns" value="baseline and differential"/>
</dbReference>
<dbReference type="GO" id="GO:0001669">
    <property type="term" value="C:acrosomal vesicle"/>
    <property type="evidence" value="ECO:0007669"/>
    <property type="project" value="Ensembl"/>
</dbReference>
<dbReference type="GO" id="GO:0005737">
    <property type="term" value="C:cytoplasm"/>
    <property type="evidence" value="ECO:0000318"/>
    <property type="project" value="GO_Central"/>
</dbReference>
<dbReference type="GO" id="GO:0031901">
    <property type="term" value="C:early endosome membrane"/>
    <property type="evidence" value="ECO:0007669"/>
    <property type="project" value="UniProtKB-SubCell"/>
</dbReference>
<dbReference type="GO" id="GO:0098978">
    <property type="term" value="C:glutamatergic synapse"/>
    <property type="evidence" value="ECO:0000318"/>
    <property type="project" value="GO_Central"/>
</dbReference>
<dbReference type="GO" id="GO:0099092">
    <property type="term" value="C:postsynaptic density, intracellular component"/>
    <property type="evidence" value="ECO:0007669"/>
    <property type="project" value="Ensembl"/>
</dbReference>
<dbReference type="GO" id="GO:0098845">
    <property type="term" value="C:postsynaptic endosome"/>
    <property type="evidence" value="ECO:0007669"/>
    <property type="project" value="Ensembl"/>
</dbReference>
<dbReference type="GO" id="GO:0098793">
    <property type="term" value="C:presynapse"/>
    <property type="evidence" value="ECO:0000318"/>
    <property type="project" value="GO_Central"/>
</dbReference>
<dbReference type="GO" id="GO:0042802">
    <property type="term" value="F:identical protein binding"/>
    <property type="evidence" value="ECO:0000353"/>
    <property type="project" value="IntAct"/>
</dbReference>
<dbReference type="GO" id="GO:0008289">
    <property type="term" value="F:lipid binding"/>
    <property type="evidence" value="ECO:0007669"/>
    <property type="project" value="UniProtKB-KW"/>
</dbReference>
<dbReference type="GO" id="GO:0007417">
    <property type="term" value="P:central nervous system development"/>
    <property type="evidence" value="ECO:0000304"/>
    <property type="project" value="ProtInc"/>
</dbReference>
<dbReference type="GO" id="GO:0006897">
    <property type="term" value="P:endocytosis"/>
    <property type="evidence" value="ECO:0007669"/>
    <property type="project" value="UniProtKB-KW"/>
</dbReference>
<dbReference type="GO" id="GO:1900186">
    <property type="term" value="P:negative regulation of clathrin-dependent endocytosis"/>
    <property type="evidence" value="ECO:0007669"/>
    <property type="project" value="Ensembl"/>
</dbReference>
<dbReference type="GO" id="GO:0045666">
    <property type="term" value="P:positive regulation of neuron differentiation"/>
    <property type="evidence" value="ECO:0007669"/>
    <property type="project" value="Ensembl"/>
</dbReference>
<dbReference type="GO" id="GO:0007165">
    <property type="term" value="P:signal transduction"/>
    <property type="evidence" value="ECO:0000304"/>
    <property type="project" value="ProtInc"/>
</dbReference>
<dbReference type="CDD" id="cd07615">
    <property type="entry name" value="BAR_Endophilin_A3"/>
    <property type="match status" value="1"/>
</dbReference>
<dbReference type="CDD" id="cd11803">
    <property type="entry name" value="SH3_Endophilin_A"/>
    <property type="match status" value="1"/>
</dbReference>
<dbReference type="FunFam" id="2.30.30.40:FF:000053">
    <property type="entry name" value="endophilin-A1 isoform X2"/>
    <property type="match status" value="1"/>
</dbReference>
<dbReference type="FunFam" id="1.20.1270.60:FF:000021">
    <property type="entry name" value="Endophilin-A2 isoform 1"/>
    <property type="match status" value="1"/>
</dbReference>
<dbReference type="Gene3D" id="1.20.1270.60">
    <property type="entry name" value="Arfaptin homology (AH) domain/BAR domain"/>
    <property type="match status" value="1"/>
</dbReference>
<dbReference type="Gene3D" id="2.30.30.40">
    <property type="entry name" value="SH3 Domains"/>
    <property type="match status" value="1"/>
</dbReference>
<dbReference type="InterPro" id="IPR027267">
    <property type="entry name" value="AH/BAR_dom_sf"/>
</dbReference>
<dbReference type="InterPro" id="IPR004148">
    <property type="entry name" value="BAR_dom"/>
</dbReference>
<dbReference type="InterPro" id="IPR032469">
    <property type="entry name" value="Endophilin-A3_BAR"/>
</dbReference>
<dbReference type="InterPro" id="IPR035824">
    <property type="entry name" value="Endophilin_A_SH3"/>
</dbReference>
<dbReference type="InterPro" id="IPR050384">
    <property type="entry name" value="Endophilin_SH3RF"/>
</dbReference>
<dbReference type="InterPro" id="IPR036028">
    <property type="entry name" value="SH3-like_dom_sf"/>
</dbReference>
<dbReference type="InterPro" id="IPR001452">
    <property type="entry name" value="SH3_domain"/>
</dbReference>
<dbReference type="PANTHER" id="PTHR14167:SF45">
    <property type="entry name" value="ENDOPHILIN-A3"/>
    <property type="match status" value="1"/>
</dbReference>
<dbReference type="PANTHER" id="PTHR14167">
    <property type="entry name" value="SH3 DOMAIN-CONTAINING"/>
    <property type="match status" value="1"/>
</dbReference>
<dbReference type="Pfam" id="PF03114">
    <property type="entry name" value="BAR"/>
    <property type="match status" value="1"/>
</dbReference>
<dbReference type="Pfam" id="PF00018">
    <property type="entry name" value="SH3_1"/>
    <property type="match status" value="1"/>
</dbReference>
<dbReference type="PRINTS" id="PR00452">
    <property type="entry name" value="SH3DOMAIN"/>
</dbReference>
<dbReference type="SMART" id="SM00721">
    <property type="entry name" value="BAR"/>
    <property type="match status" value="1"/>
</dbReference>
<dbReference type="SMART" id="SM00326">
    <property type="entry name" value="SH3"/>
    <property type="match status" value="1"/>
</dbReference>
<dbReference type="SUPFAM" id="SSF103657">
    <property type="entry name" value="BAR/IMD domain-like"/>
    <property type="match status" value="1"/>
</dbReference>
<dbReference type="SUPFAM" id="SSF50044">
    <property type="entry name" value="SH3-domain"/>
    <property type="match status" value="1"/>
</dbReference>
<dbReference type="PROSITE" id="PS51021">
    <property type="entry name" value="BAR"/>
    <property type="match status" value="1"/>
</dbReference>
<dbReference type="PROSITE" id="PS50002">
    <property type="entry name" value="SH3"/>
    <property type="match status" value="1"/>
</dbReference>